<protein>
    <recommendedName>
        <fullName>Serine/threonine-protein kinase AKL1</fullName>
        <ecNumber evidence="5">2.7.11.1</ecNumber>
    </recommendedName>
</protein>
<sequence>MSITNGTSRSVSAMGHPAVERYTPGHIVCVGTHKVEVVNYLAEGGFAQIYVVKFLEYLNEFDNTASVPLKIGDVACLKRVLVQDENGLNEMRNEVEVMKKLKGAPNIVQYFDSNASRRRDGVQGFEVLLLMELCPNKSLLDYMNQRLSTKLTEAEIVKIMYDVALSISQMHYLPVSLIHRDIKIENVLVDAKNNFKLADFGSTSTCFPIVTTHQDIALLTQNIYVHTTPQYRSPEMIDLYRCLPINEKSDIWALGVFLYKLLFFTTPFEMTGQFAILHSKYEFPVNKYSSKLINLIIIMLAENPNLRPNIYQVLYHLCEILNVEVPIEDKYAEGAYNFSKYTQFQNKLQNVQLQMYQLQQKKIMQNNKLSDSEENLLNDMFLSSFEISSKLPMNASDGHAAVSRIPSQNVGQELEEEKESQSDQRKSTLSEDKSSRTTSNANSSGTANNPQEINTIQSPGIEDKSIFENKTPGELYYPSVSELDTYLDKELVKQSSDPTISEQSPRLNTQSLPQRQKSTSSYSSGGRSMKSTSYGAATIGSDEALANEKTAGINKMKQHKSNNPFPKMNVAYHSTNELSNDASNFFLEEQQQGQRYQQAQNQTGTQGNTFPDESQYQSRVEQQQQQQDQPKGPANYSQRNFYTGRDRSNKPMQLGGTIAGDSGNRRVNFQNISQNYATNSQSGYLPSQNSPAIPMVRPVISMNQQQAQQIQAQQLQAQQMQAKQQMQAKQQMQVQQQLQVQQQMQIQNANNNGTYVSDRTNHTTEDMRNAQGGEPPILAGNSANEPMHSSSKNEALLIELSPLKEDAGKQSFQDTNEPQTGGIEDAGGSGTIKGSNNNRNGVLNLSLNEMDLSRDDTGAAVSSFSSSSSSASIQQAKLSGRKGSSKRNNYSTDELGDSMVSSESIDIDLDDARRGKTAERRPLHNERGHKDQARSSDASKSNQFKSKDFSSVSTRQPRQSLDLNFQEVNLSSPTLTQEHRNKNDSPAPNSHHSYRVSPHASTAITENKRHSTGHELSTRSNGKHETHRTGSKQRHDLERYRHSKDKDSNSSITISTSTPSEMRKSFARARQSLDLERVRREAMASSASSSGGSNGKRRSFFSVFRSEK</sequence>
<comment type="function">
    <text evidence="5">Phosphorylates SCD5.</text>
</comment>
<comment type="catalytic activity">
    <reaction>
        <text>L-seryl-[protein] + ATP = O-phospho-L-seryl-[protein] + ADP + H(+)</text>
        <dbReference type="Rhea" id="RHEA:17989"/>
        <dbReference type="Rhea" id="RHEA-COMP:9863"/>
        <dbReference type="Rhea" id="RHEA-COMP:11604"/>
        <dbReference type="ChEBI" id="CHEBI:15378"/>
        <dbReference type="ChEBI" id="CHEBI:29999"/>
        <dbReference type="ChEBI" id="CHEBI:30616"/>
        <dbReference type="ChEBI" id="CHEBI:83421"/>
        <dbReference type="ChEBI" id="CHEBI:456216"/>
        <dbReference type="EC" id="2.7.11.1"/>
    </reaction>
</comment>
<comment type="catalytic activity">
    <reaction evidence="5">
        <text>L-threonyl-[protein] + ATP = O-phospho-L-threonyl-[protein] + ADP + H(+)</text>
        <dbReference type="Rhea" id="RHEA:46608"/>
        <dbReference type="Rhea" id="RHEA-COMP:11060"/>
        <dbReference type="Rhea" id="RHEA-COMP:11605"/>
        <dbReference type="ChEBI" id="CHEBI:15378"/>
        <dbReference type="ChEBI" id="CHEBI:30013"/>
        <dbReference type="ChEBI" id="CHEBI:30616"/>
        <dbReference type="ChEBI" id="CHEBI:61977"/>
        <dbReference type="ChEBI" id="CHEBI:456216"/>
        <dbReference type="EC" id="2.7.11.1"/>
    </reaction>
</comment>
<comment type="miscellaneous">
    <text evidence="6">Present with 3000 molecules/cell in log phase SD medium.</text>
</comment>
<comment type="similarity">
    <text evidence="1">Belongs to the protein kinase superfamily. Ser/Thr protein kinase family.</text>
</comment>
<dbReference type="EC" id="2.7.11.1" evidence="5"/>
<dbReference type="EMBL" id="Z35928">
    <property type="protein sequence ID" value="CAA85002.1"/>
    <property type="molecule type" value="Genomic_DNA"/>
</dbReference>
<dbReference type="EMBL" id="BK006936">
    <property type="protein sequence ID" value="DAA07179.1"/>
    <property type="molecule type" value="Genomic_DNA"/>
</dbReference>
<dbReference type="PIR" id="S45917">
    <property type="entry name" value="S45917"/>
</dbReference>
<dbReference type="RefSeq" id="NP_009615.1">
    <property type="nucleotide sequence ID" value="NM_001178407.1"/>
</dbReference>
<dbReference type="SMR" id="P38080"/>
<dbReference type="BioGRID" id="32763">
    <property type="interactions" value="224"/>
</dbReference>
<dbReference type="DIP" id="DIP-1717N"/>
<dbReference type="FunCoup" id="P38080">
    <property type="interactions" value="456"/>
</dbReference>
<dbReference type="IntAct" id="P38080">
    <property type="interactions" value="48"/>
</dbReference>
<dbReference type="MINT" id="P38080"/>
<dbReference type="STRING" id="4932.YBR059C"/>
<dbReference type="GlyGen" id="P38080">
    <property type="glycosylation" value="2 sites, 1 O-linked glycan (2 sites)"/>
</dbReference>
<dbReference type="iPTMnet" id="P38080"/>
<dbReference type="PaxDb" id="4932-YBR059C"/>
<dbReference type="PeptideAtlas" id="P38080"/>
<dbReference type="EnsemblFungi" id="YBR059C_mRNA">
    <property type="protein sequence ID" value="YBR059C"/>
    <property type="gene ID" value="YBR059C"/>
</dbReference>
<dbReference type="GeneID" id="852351"/>
<dbReference type="KEGG" id="sce:YBR059C"/>
<dbReference type="AGR" id="SGD:S000000263"/>
<dbReference type="SGD" id="S000000263">
    <property type="gene designation" value="AKL1"/>
</dbReference>
<dbReference type="VEuPathDB" id="FungiDB:YBR059C"/>
<dbReference type="eggNOG" id="KOG1989">
    <property type="taxonomic scope" value="Eukaryota"/>
</dbReference>
<dbReference type="GeneTree" id="ENSGT00940000170379"/>
<dbReference type="HOGENOM" id="CLU_005611_0_0_1"/>
<dbReference type="InParanoid" id="P38080"/>
<dbReference type="OMA" id="PFEMTGQ"/>
<dbReference type="OrthoDB" id="2018507at2759"/>
<dbReference type="BioCyc" id="YEAST:G3O-29030-MONOMER"/>
<dbReference type="BioGRID-ORCS" id="852351">
    <property type="hits" value="1 hit in 13 CRISPR screens"/>
</dbReference>
<dbReference type="PRO" id="PR:P38080"/>
<dbReference type="Proteomes" id="UP000002311">
    <property type="component" value="Chromosome II"/>
</dbReference>
<dbReference type="RNAct" id="P38080">
    <property type="molecule type" value="protein"/>
</dbReference>
<dbReference type="GO" id="GO:0071944">
    <property type="term" value="C:cell periphery"/>
    <property type="evidence" value="ECO:0007005"/>
    <property type="project" value="SGD"/>
</dbReference>
<dbReference type="GO" id="GO:0005935">
    <property type="term" value="C:cellular bud neck"/>
    <property type="evidence" value="ECO:0007005"/>
    <property type="project" value="SGD"/>
</dbReference>
<dbReference type="GO" id="GO:0005737">
    <property type="term" value="C:cytoplasm"/>
    <property type="evidence" value="ECO:0007005"/>
    <property type="project" value="SGD"/>
</dbReference>
<dbReference type="GO" id="GO:0005628">
    <property type="term" value="C:prospore membrane"/>
    <property type="evidence" value="ECO:0007005"/>
    <property type="project" value="SGD"/>
</dbReference>
<dbReference type="GO" id="GO:0005524">
    <property type="term" value="F:ATP binding"/>
    <property type="evidence" value="ECO:0007669"/>
    <property type="project" value="UniProtKB-KW"/>
</dbReference>
<dbReference type="GO" id="GO:0004672">
    <property type="term" value="F:protein kinase activity"/>
    <property type="evidence" value="ECO:0007005"/>
    <property type="project" value="SGD"/>
</dbReference>
<dbReference type="GO" id="GO:0106310">
    <property type="term" value="F:protein serine kinase activity"/>
    <property type="evidence" value="ECO:0007669"/>
    <property type="project" value="RHEA"/>
</dbReference>
<dbReference type="GO" id="GO:0004674">
    <property type="term" value="F:protein serine/threonine kinase activity"/>
    <property type="evidence" value="ECO:0000314"/>
    <property type="project" value="SGD"/>
</dbReference>
<dbReference type="GO" id="GO:0000147">
    <property type="term" value="P:actin cortical patch assembly"/>
    <property type="evidence" value="ECO:0000318"/>
    <property type="project" value="GO_Central"/>
</dbReference>
<dbReference type="GO" id="GO:0007015">
    <property type="term" value="P:actin filament organization"/>
    <property type="evidence" value="ECO:0000318"/>
    <property type="project" value="GO_Central"/>
</dbReference>
<dbReference type="GO" id="GO:1900186">
    <property type="term" value="P:negative regulation of clathrin-dependent endocytosis"/>
    <property type="evidence" value="ECO:0000315"/>
    <property type="project" value="SGD"/>
</dbReference>
<dbReference type="CDD" id="cd14037">
    <property type="entry name" value="STKc_NAK_like"/>
    <property type="match status" value="1"/>
</dbReference>
<dbReference type="FunFam" id="1.10.510.10:FF:001038">
    <property type="entry name" value="Serine/threonine-protein kinase AKL1"/>
    <property type="match status" value="1"/>
</dbReference>
<dbReference type="Gene3D" id="1.10.510.10">
    <property type="entry name" value="Transferase(Phosphotransferase) domain 1"/>
    <property type="match status" value="1"/>
</dbReference>
<dbReference type="InterPro" id="IPR011009">
    <property type="entry name" value="Kinase-like_dom_sf"/>
</dbReference>
<dbReference type="InterPro" id="IPR000719">
    <property type="entry name" value="Prot_kinase_dom"/>
</dbReference>
<dbReference type="InterPro" id="IPR008271">
    <property type="entry name" value="Ser/Thr_kinase_AS"/>
</dbReference>
<dbReference type="PANTHER" id="PTHR22967">
    <property type="entry name" value="SERINE/THREONINE PROTEIN KINASE"/>
    <property type="match status" value="1"/>
</dbReference>
<dbReference type="PANTHER" id="PTHR22967:SF65">
    <property type="entry name" value="SERINE_THREONINE-PROTEIN KINASE AKL1"/>
    <property type="match status" value="1"/>
</dbReference>
<dbReference type="Pfam" id="PF00069">
    <property type="entry name" value="Pkinase"/>
    <property type="match status" value="1"/>
</dbReference>
<dbReference type="SMART" id="SM00220">
    <property type="entry name" value="S_TKc"/>
    <property type="match status" value="1"/>
</dbReference>
<dbReference type="SUPFAM" id="SSF56112">
    <property type="entry name" value="Protein kinase-like (PK-like)"/>
    <property type="match status" value="1"/>
</dbReference>
<dbReference type="PROSITE" id="PS50011">
    <property type="entry name" value="PROTEIN_KINASE_DOM"/>
    <property type="match status" value="1"/>
</dbReference>
<dbReference type="PROSITE" id="PS00108">
    <property type="entry name" value="PROTEIN_KINASE_ST"/>
    <property type="match status" value="1"/>
</dbReference>
<accession>P38080</accession>
<accession>D6VQ59</accession>
<name>AKL1_YEAST</name>
<gene>
    <name type="primary">AKL1</name>
    <name type="ordered locus">YBR059C</name>
    <name type="ORF">YBR0519</name>
</gene>
<evidence type="ECO:0000255" key="1">
    <source>
        <dbReference type="PROSITE-ProRule" id="PRU00159"/>
    </source>
</evidence>
<evidence type="ECO:0000255" key="2">
    <source>
        <dbReference type="PROSITE-ProRule" id="PRU10027"/>
    </source>
</evidence>
<evidence type="ECO:0000256" key="3">
    <source>
        <dbReference type="SAM" id="MobiDB-lite"/>
    </source>
</evidence>
<evidence type="ECO:0000269" key="4">
    <source>
    </source>
</evidence>
<evidence type="ECO:0000269" key="5">
    <source>
    </source>
</evidence>
<evidence type="ECO:0000269" key="6">
    <source>
    </source>
</evidence>
<evidence type="ECO:0007744" key="7">
    <source>
    </source>
</evidence>
<evidence type="ECO:0007744" key="8">
    <source>
    </source>
</evidence>
<evidence type="ECO:0007744" key="9">
    <source>
    </source>
</evidence>
<evidence type="ECO:0007744" key="10">
    <source>
    </source>
</evidence>
<reference key="1">
    <citation type="journal article" date="1994" name="EMBO J.">
        <title>Complete DNA sequence of yeast chromosome II.</title>
        <authorList>
            <person name="Feldmann H."/>
            <person name="Aigle M."/>
            <person name="Aljinovic G."/>
            <person name="Andre B."/>
            <person name="Baclet M.C."/>
            <person name="Barthe C."/>
            <person name="Baur A."/>
            <person name="Becam A.-M."/>
            <person name="Biteau N."/>
            <person name="Boles E."/>
            <person name="Brandt T."/>
            <person name="Brendel M."/>
            <person name="Brueckner M."/>
            <person name="Bussereau F."/>
            <person name="Christiansen C."/>
            <person name="Contreras R."/>
            <person name="Crouzet M."/>
            <person name="Cziepluch C."/>
            <person name="Demolis N."/>
            <person name="Delaveau T."/>
            <person name="Doignon F."/>
            <person name="Domdey H."/>
            <person name="Duesterhus S."/>
            <person name="Dubois E."/>
            <person name="Dujon B."/>
            <person name="El Bakkoury M."/>
            <person name="Entian K.-D."/>
            <person name="Feuermann M."/>
            <person name="Fiers W."/>
            <person name="Fobo G.M."/>
            <person name="Fritz C."/>
            <person name="Gassenhuber J."/>
            <person name="Glansdorff N."/>
            <person name="Goffeau A."/>
            <person name="Grivell L.A."/>
            <person name="de Haan M."/>
            <person name="Hein C."/>
            <person name="Herbert C.J."/>
            <person name="Hollenberg C.P."/>
            <person name="Holmstroem K."/>
            <person name="Jacq C."/>
            <person name="Jacquet M."/>
            <person name="Jauniaux J.-C."/>
            <person name="Jonniaux J.-L."/>
            <person name="Kallesoee T."/>
            <person name="Kiesau P."/>
            <person name="Kirchrath L."/>
            <person name="Koetter P."/>
            <person name="Korol S."/>
            <person name="Liebl S."/>
            <person name="Logghe M."/>
            <person name="Lohan A.J.E."/>
            <person name="Louis E.J."/>
            <person name="Li Z.Y."/>
            <person name="Maat M.J."/>
            <person name="Mallet L."/>
            <person name="Mannhaupt G."/>
            <person name="Messenguy F."/>
            <person name="Miosga T."/>
            <person name="Molemans F."/>
            <person name="Mueller S."/>
            <person name="Nasr F."/>
            <person name="Obermaier B."/>
            <person name="Perea J."/>
            <person name="Pierard A."/>
            <person name="Piravandi E."/>
            <person name="Pohl F.M."/>
            <person name="Pohl T.M."/>
            <person name="Potier S."/>
            <person name="Proft M."/>
            <person name="Purnelle B."/>
            <person name="Ramezani Rad M."/>
            <person name="Rieger M."/>
            <person name="Rose M."/>
            <person name="Schaaff-Gerstenschlaeger I."/>
            <person name="Scherens B."/>
            <person name="Schwarzlose C."/>
            <person name="Skala J."/>
            <person name="Slonimski P.P."/>
            <person name="Smits P.H.M."/>
            <person name="Souciet J.-L."/>
            <person name="Steensma H.Y."/>
            <person name="Stucka R."/>
            <person name="Urrestarazu L.A."/>
            <person name="van der Aart Q.J.M."/>
            <person name="Van Dyck L."/>
            <person name="Vassarotti A."/>
            <person name="Vetter I."/>
            <person name="Vierendeels F."/>
            <person name="Vissers S."/>
            <person name="Wagner G."/>
            <person name="de Wergifosse P."/>
            <person name="Wolfe K.H."/>
            <person name="Zagulski M."/>
            <person name="Zimmermann F.K."/>
            <person name="Mewes H.-W."/>
            <person name="Kleine K."/>
        </authorList>
    </citation>
    <scope>NUCLEOTIDE SEQUENCE [LARGE SCALE GENOMIC DNA]</scope>
    <source>
        <strain>ATCC 204508 / S288c</strain>
    </source>
</reference>
<reference key="2">
    <citation type="journal article" date="2014" name="G3 (Bethesda)">
        <title>The reference genome sequence of Saccharomyces cerevisiae: Then and now.</title>
        <authorList>
            <person name="Engel S.R."/>
            <person name="Dietrich F.S."/>
            <person name="Fisk D.G."/>
            <person name="Binkley G."/>
            <person name="Balakrishnan R."/>
            <person name="Costanzo M.C."/>
            <person name="Dwight S.S."/>
            <person name="Hitz B.C."/>
            <person name="Karra K."/>
            <person name="Nash R.S."/>
            <person name="Weng S."/>
            <person name="Wong E.D."/>
            <person name="Lloyd P."/>
            <person name="Skrzypek M.S."/>
            <person name="Miyasato S.R."/>
            <person name="Simison M."/>
            <person name="Cherry J.M."/>
        </authorList>
    </citation>
    <scope>GENOME REANNOTATION</scope>
    <source>
        <strain>ATCC 204508 / S288c</strain>
    </source>
</reference>
<reference key="3">
    <citation type="journal article" date="2003" name="Curr. Biol.">
        <title>The actin-regulating kinase Prk1p negatively regulates Scd5p, a suppressor of clathrin deficiency, in actin organization and endocytosis.</title>
        <authorList>
            <person name="Henry K.R."/>
            <person name="D'Hondt K."/>
            <person name="Chang J.S."/>
            <person name="Nix D.A."/>
            <person name="Cope M.J."/>
            <person name="Chan C.S."/>
            <person name="Drubin D.G."/>
            <person name="Lemmon S.K."/>
        </authorList>
    </citation>
    <scope>FUNCTION</scope>
    <scope>CATALYTIC ACTIVITY</scope>
</reference>
<reference key="4">
    <citation type="journal article" date="2003" name="Nature">
        <title>Global analysis of protein expression in yeast.</title>
        <authorList>
            <person name="Ghaemmaghami S."/>
            <person name="Huh W.-K."/>
            <person name="Bower K."/>
            <person name="Howson R.W."/>
            <person name="Belle A."/>
            <person name="Dephoure N."/>
            <person name="O'Shea E.K."/>
            <person name="Weissman J.S."/>
        </authorList>
    </citation>
    <scope>LEVEL OF PROTEIN EXPRESSION [LARGE SCALE ANALYSIS]</scope>
</reference>
<reference key="5">
    <citation type="journal article" date="2003" name="Nat. Biotechnol.">
        <title>A proteomics approach to understanding protein ubiquitination.</title>
        <authorList>
            <person name="Peng J."/>
            <person name="Schwartz D."/>
            <person name="Elias J.E."/>
            <person name="Thoreen C.C."/>
            <person name="Cheng D."/>
            <person name="Marsischky G."/>
            <person name="Roelofs J."/>
            <person name="Finley D."/>
            <person name="Gygi S.P."/>
        </authorList>
    </citation>
    <scope>UBIQUITINATION [LARGE SCALE ANALYSIS] AT LYS-1008 AND LYS-1046</scope>
    <scope>IDENTIFICATION BY MASS SPECTROMETRY</scope>
    <source>
        <strain>SUB592</strain>
    </source>
</reference>
<reference key="6">
    <citation type="journal article" date="2007" name="J. Proteome Res.">
        <title>Large-scale phosphorylation analysis of alpha-factor-arrested Saccharomyces cerevisiae.</title>
        <authorList>
            <person name="Li X."/>
            <person name="Gerber S.A."/>
            <person name="Rudner A.D."/>
            <person name="Beausoleil S.A."/>
            <person name="Haas W."/>
            <person name="Villen J."/>
            <person name="Elias J.E."/>
            <person name="Gygi S.P."/>
        </authorList>
    </citation>
    <scope>PHOSPHORYLATION [LARGE SCALE ANALYSIS] AT SER-541; SER-801 AND SER-1072</scope>
    <scope>IDENTIFICATION BY MASS SPECTROMETRY [LARGE SCALE ANALYSIS]</scope>
    <source>
        <strain>ADR376</strain>
    </source>
</reference>
<reference key="7">
    <citation type="journal article" date="2008" name="Mol. Cell. Proteomics">
        <title>A multidimensional chromatography technology for in-depth phosphoproteome analysis.</title>
        <authorList>
            <person name="Albuquerque C.P."/>
            <person name="Smolka M.B."/>
            <person name="Payne S.H."/>
            <person name="Bafna V."/>
            <person name="Eng J."/>
            <person name="Zhou H."/>
        </authorList>
    </citation>
    <scope>PHOSPHORYLATION [LARGE SCALE ANALYSIS] AT SER-407; THR-471; SER-504; SER-541 AND SER-846</scope>
    <scope>IDENTIFICATION BY MASS SPECTROMETRY [LARGE SCALE ANALYSIS]</scope>
</reference>
<reference key="8">
    <citation type="journal article" date="2009" name="Science">
        <title>Global analysis of Cdk1 substrate phosphorylation sites provides insights into evolution.</title>
        <authorList>
            <person name="Holt L.J."/>
            <person name="Tuch B.B."/>
            <person name="Villen J."/>
            <person name="Johnson A.D."/>
            <person name="Gygi S.P."/>
            <person name="Morgan D.O."/>
        </authorList>
    </citation>
    <scope>PHOSPHORYLATION [LARGE SCALE ANALYSIS] AT SER-10; SER-407; SER-504; SER-541; SER-574; SER-801; SER-846; SER-953; SER-960 AND SER-1048</scope>
    <scope>IDENTIFICATION BY MASS SPECTROMETRY [LARGE SCALE ANALYSIS]</scope>
</reference>
<reference key="9">
    <citation type="journal article" date="2012" name="Proc. Natl. Acad. Sci. U.S.A.">
        <title>N-terminal acetylome analyses and functional insights of the N-terminal acetyltransferase NatB.</title>
        <authorList>
            <person name="Van Damme P."/>
            <person name="Lasa M."/>
            <person name="Polevoda B."/>
            <person name="Gazquez C."/>
            <person name="Elosegui-Artola A."/>
            <person name="Kim D.S."/>
            <person name="De Juan-Pardo E."/>
            <person name="Demeyer K."/>
            <person name="Hole K."/>
            <person name="Larrea E."/>
            <person name="Timmerman E."/>
            <person name="Prieto J."/>
            <person name="Arnesen T."/>
            <person name="Sherman F."/>
            <person name="Gevaert K."/>
            <person name="Aldabe R."/>
        </authorList>
    </citation>
    <scope>ACETYLATION [LARGE SCALE ANALYSIS] AT SER-2</scope>
    <scope>CLEAVAGE OF INITIATOR METHIONINE [LARGE SCALE ANALYSIS]</scope>
    <scope>IDENTIFICATION BY MASS SPECTROMETRY [LARGE SCALE ANALYSIS]</scope>
</reference>
<proteinExistence type="evidence at protein level"/>
<feature type="initiator methionine" description="Removed" evidence="10">
    <location>
        <position position="1"/>
    </location>
</feature>
<feature type="chain" id="PRO_0000085603" description="Serine/threonine-protein kinase AKL1">
    <location>
        <begin position="2"/>
        <end position="1108"/>
    </location>
</feature>
<feature type="domain" description="Protein kinase" evidence="1">
    <location>
        <begin position="35"/>
        <end position="319"/>
    </location>
</feature>
<feature type="region of interest" description="Disordered" evidence="3">
    <location>
        <begin position="405"/>
        <end position="466"/>
    </location>
</feature>
<feature type="region of interest" description="Disordered" evidence="3">
    <location>
        <begin position="493"/>
        <end position="534"/>
    </location>
</feature>
<feature type="region of interest" description="Disordered" evidence="3">
    <location>
        <begin position="590"/>
        <end position="663"/>
    </location>
</feature>
<feature type="region of interest" description="Disordered" evidence="3">
    <location>
        <begin position="765"/>
        <end position="791"/>
    </location>
</feature>
<feature type="region of interest" description="Disordered" evidence="3">
    <location>
        <begin position="807"/>
        <end position="838"/>
    </location>
</feature>
<feature type="region of interest" description="Disordered" evidence="3">
    <location>
        <begin position="858"/>
        <end position="1108"/>
    </location>
</feature>
<feature type="compositionally biased region" description="Basic and acidic residues" evidence="3">
    <location>
        <begin position="419"/>
        <end position="435"/>
    </location>
</feature>
<feature type="compositionally biased region" description="Low complexity" evidence="3">
    <location>
        <begin position="436"/>
        <end position="449"/>
    </location>
</feature>
<feature type="compositionally biased region" description="Polar residues" evidence="3">
    <location>
        <begin position="493"/>
        <end position="513"/>
    </location>
</feature>
<feature type="compositionally biased region" description="Low complexity" evidence="3">
    <location>
        <begin position="514"/>
        <end position="534"/>
    </location>
</feature>
<feature type="compositionally biased region" description="Low complexity" evidence="3">
    <location>
        <begin position="590"/>
        <end position="629"/>
    </location>
</feature>
<feature type="compositionally biased region" description="Polar residues" evidence="3">
    <location>
        <begin position="781"/>
        <end position="791"/>
    </location>
</feature>
<feature type="compositionally biased region" description="Polar residues" evidence="3">
    <location>
        <begin position="810"/>
        <end position="819"/>
    </location>
</feature>
<feature type="compositionally biased region" description="Low complexity" evidence="3">
    <location>
        <begin position="859"/>
        <end position="872"/>
    </location>
</feature>
<feature type="compositionally biased region" description="Basic and acidic residues" evidence="3">
    <location>
        <begin position="910"/>
        <end position="934"/>
    </location>
</feature>
<feature type="compositionally biased region" description="Polar residues" evidence="3">
    <location>
        <begin position="935"/>
        <end position="976"/>
    </location>
</feature>
<feature type="compositionally biased region" description="Basic and acidic residues" evidence="3">
    <location>
        <begin position="1006"/>
        <end position="1048"/>
    </location>
</feature>
<feature type="compositionally biased region" description="Low complexity" evidence="3">
    <location>
        <begin position="1049"/>
        <end position="1060"/>
    </location>
</feature>
<feature type="compositionally biased region" description="Basic and acidic residues" evidence="3">
    <location>
        <begin position="1071"/>
        <end position="1082"/>
    </location>
</feature>
<feature type="active site" description="Proton acceptor" evidence="1 2">
    <location>
        <position position="181"/>
    </location>
</feature>
<feature type="binding site" evidence="1">
    <location>
        <begin position="41"/>
        <end position="49"/>
    </location>
    <ligand>
        <name>ATP</name>
        <dbReference type="ChEBI" id="CHEBI:30616"/>
    </ligand>
</feature>
<feature type="binding site" evidence="1">
    <location>
        <position position="70"/>
    </location>
    <ligand>
        <name>ATP</name>
        <dbReference type="ChEBI" id="CHEBI:30616"/>
    </ligand>
</feature>
<feature type="modified residue" description="N-acetylserine" evidence="10">
    <location>
        <position position="2"/>
    </location>
</feature>
<feature type="modified residue" description="Phosphoserine" evidence="9">
    <location>
        <position position="10"/>
    </location>
</feature>
<feature type="modified residue" description="Phosphoserine" evidence="8 9">
    <location>
        <position position="407"/>
    </location>
</feature>
<feature type="modified residue" description="Phosphothreonine" evidence="8">
    <location>
        <position position="471"/>
    </location>
</feature>
<feature type="modified residue" description="Phosphoserine" evidence="8 9">
    <location>
        <position position="504"/>
    </location>
</feature>
<feature type="modified residue" description="Phosphoserine" evidence="7 8 9">
    <location>
        <position position="541"/>
    </location>
</feature>
<feature type="modified residue" description="Phosphoserine" evidence="9">
    <location>
        <position position="574"/>
    </location>
</feature>
<feature type="modified residue" description="Phosphoserine" evidence="7 9">
    <location>
        <position position="801"/>
    </location>
</feature>
<feature type="modified residue" description="Phosphoserine" evidence="8 9">
    <location>
        <position position="846"/>
    </location>
</feature>
<feature type="modified residue" description="Phosphoserine" evidence="9">
    <location>
        <position position="953"/>
    </location>
</feature>
<feature type="modified residue" description="Phosphoserine" evidence="9">
    <location>
        <position position="960"/>
    </location>
</feature>
<feature type="modified residue" description="Phosphoserine" evidence="9">
    <location>
        <position position="1048"/>
    </location>
</feature>
<feature type="modified residue" description="Phosphoserine" evidence="7">
    <location>
        <position position="1072"/>
    </location>
</feature>
<feature type="cross-link" description="Glycyl lysine isopeptide (Lys-Gly) (interchain with G-Cter in ubiquitin)" evidence="4">
    <location>
        <position position="1008"/>
    </location>
</feature>
<feature type="cross-link" description="Glycyl lysine isopeptide (Lys-Gly) (interchain with G-Cter in ubiquitin)" evidence="4">
    <location>
        <position position="1046"/>
    </location>
</feature>
<organism>
    <name type="scientific">Saccharomyces cerevisiae (strain ATCC 204508 / S288c)</name>
    <name type="common">Baker's yeast</name>
    <dbReference type="NCBI Taxonomy" id="559292"/>
    <lineage>
        <taxon>Eukaryota</taxon>
        <taxon>Fungi</taxon>
        <taxon>Dikarya</taxon>
        <taxon>Ascomycota</taxon>
        <taxon>Saccharomycotina</taxon>
        <taxon>Saccharomycetes</taxon>
        <taxon>Saccharomycetales</taxon>
        <taxon>Saccharomycetaceae</taxon>
        <taxon>Saccharomyces</taxon>
    </lineage>
</organism>
<keyword id="KW-0007">Acetylation</keyword>
<keyword id="KW-0067">ATP-binding</keyword>
<keyword id="KW-1017">Isopeptide bond</keyword>
<keyword id="KW-0418">Kinase</keyword>
<keyword id="KW-0547">Nucleotide-binding</keyword>
<keyword id="KW-0597">Phosphoprotein</keyword>
<keyword id="KW-1185">Reference proteome</keyword>
<keyword id="KW-0723">Serine/threonine-protein kinase</keyword>
<keyword id="KW-0808">Transferase</keyword>
<keyword id="KW-0832">Ubl conjugation</keyword>